<dbReference type="EMBL" id="AC007196">
    <property type="protein sequence ID" value="AAD24821.1"/>
    <property type="molecule type" value="Genomic_DNA"/>
</dbReference>
<dbReference type="EMBL" id="CP002685">
    <property type="protein sequence ID" value="AEC05762.1"/>
    <property type="molecule type" value="Genomic_DNA"/>
</dbReference>
<dbReference type="EMBL" id="BT003840">
    <property type="protein sequence ID" value="AAO41891.1"/>
    <property type="molecule type" value="mRNA"/>
</dbReference>
<dbReference type="PIR" id="C84453">
    <property type="entry name" value="C84453"/>
</dbReference>
<dbReference type="SMR" id="Q9SI53"/>
<dbReference type="FunCoup" id="Q9SI53">
    <property type="interactions" value="20"/>
</dbReference>
<dbReference type="STRING" id="3702.Q9SI53"/>
<dbReference type="PaxDb" id="3702-AT2G03880.1"/>
<dbReference type="ProteomicsDB" id="249414"/>
<dbReference type="EnsemblPlants" id="AT2G03880.1">
    <property type="protein sequence ID" value="AT2G03880.1"/>
    <property type="gene ID" value="AT2G03880"/>
</dbReference>
<dbReference type="GeneID" id="814914"/>
<dbReference type="Gramene" id="AT2G03880.1">
    <property type="protein sequence ID" value="AT2G03880.1"/>
    <property type="gene ID" value="AT2G03880"/>
</dbReference>
<dbReference type="KEGG" id="ath:AT2G03880"/>
<dbReference type="Araport" id="AT2G03880"/>
<dbReference type="TAIR" id="AT2G03880">
    <property type="gene designation" value="REME1"/>
</dbReference>
<dbReference type="eggNOG" id="KOG4197">
    <property type="taxonomic scope" value="Eukaryota"/>
</dbReference>
<dbReference type="HOGENOM" id="CLU_002706_37_8_1"/>
<dbReference type="InParanoid" id="Q9SI53"/>
<dbReference type="OMA" id="DGWYYFQ"/>
<dbReference type="PhylomeDB" id="Q9SI53"/>
<dbReference type="PRO" id="PR:Q9SI53"/>
<dbReference type="Proteomes" id="UP000006548">
    <property type="component" value="Chromosome 2"/>
</dbReference>
<dbReference type="ExpressionAtlas" id="Q9SI53">
    <property type="expression patterns" value="baseline and differential"/>
</dbReference>
<dbReference type="GO" id="GO:0005739">
    <property type="term" value="C:mitochondrion"/>
    <property type="evidence" value="ECO:0000314"/>
    <property type="project" value="TAIR"/>
</dbReference>
<dbReference type="GO" id="GO:0003723">
    <property type="term" value="F:RNA binding"/>
    <property type="evidence" value="ECO:0007669"/>
    <property type="project" value="InterPro"/>
</dbReference>
<dbReference type="GO" id="GO:0008270">
    <property type="term" value="F:zinc ion binding"/>
    <property type="evidence" value="ECO:0007669"/>
    <property type="project" value="InterPro"/>
</dbReference>
<dbReference type="GO" id="GO:0009451">
    <property type="term" value="P:RNA modification"/>
    <property type="evidence" value="ECO:0000315"/>
    <property type="project" value="TAIR"/>
</dbReference>
<dbReference type="FunFam" id="1.25.40.10:FF:000366">
    <property type="entry name" value="Pentatricopeptide (PPR) repeat-containing protein"/>
    <property type="match status" value="1"/>
</dbReference>
<dbReference type="FunFam" id="1.25.40.10:FF:000031">
    <property type="entry name" value="Pentatricopeptide repeat-containing protein mitochondrial"/>
    <property type="match status" value="1"/>
</dbReference>
<dbReference type="FunFam" id="1.25.40.10:FF:000380">
    <property type="entry name" value="Pentatricopeptide repeat-containing protein, chloroplastic"/>
    <property type="match status" value="1"/>
</dbReference>
<dbReference type="FunFam" id="1.25.40.10:FF:000488">
    <property type="entry name" value="Pentatricopeptide repeat-containing protein, mitochondrial"/>
    <property type="match status" value="1"/>
</dbReference>
<dbReference type="Gene3D" id="1.25.40.10">
    <property type="entry name" value="Tetratricopeptide repeat domain"/>
    <property type="match status" value="4"/>
</dbReference>
<dbReference type="InterPro" id="IPR032867">
    <property type="entry name" value="DYW_dom"/>
</dbReference>
<dbReference type="InterPro" id="IPR046848">
    <property type="entry name" value="E_motif"/>
</dbReference>
<dbReference type="InterPro" id="IPR002885">
    <property type="entry name" value="Pentatricopeptide_rpt"/>
</dbReference>
<dbReference type="InterPro" id="IPR046960">
    <property type="entry name" value="PPR_At4g14850-like_plant"/>
</dbReference>
<dbReference type="InterPro" id="IPR011990">
    <property type="entry name" value="TPR-like_helical_dom_sf"/>
</dbReference>
<dbReference type="NCBIfam" id="TIGR00756">
    <property type="entry name" value="PPR"/>
    <property type="match status" value="6"/>
</dbReference>
<dbReference type="PANTHER" id="PTHR47926">
    <property type="entry name" value="PENTATRICOPEPTIDE REPEAT-CONTAINING PROTEIN"/>
    <property type="match status" value="1"/>
</dbReference>
<dbReference type="PANTHER" id="PTHR47926:SF420">
    <property type="entry name" value="REPEAT-CONTAINING PROTEIN, PUTATIVE-RELATED"/>
    <property type="match status" value="1"/>
</dbReference>
<dbReference type="Pfam" id="PF14432">
    <property type="entry name" value="DYW_deaminase"/>
    <property type="match status" value="1"/>
</dbReference>
<dbReference type="Pfam" id="PF20431">
    <property type="entry name" value="E_motif"/>
    <property type="match status" value="1"/>
</dbReference>
<dbReference type="Pfam" id="PF01535">
    <property type="entry name" value="PPR"/>
    <property type="match status" value="1"/>
</dbReference>
<dbReference type="Pfam" id="PF12854">
    <property type="entry name" value="PPR_1"/>
    <property type="match status" value="1"/>
</dbReference>
<dbReference type="Pfam" id="PF13041">
    <property type="entry name" value="PPR_2"/>
    <property type="match status" value="4"/>
</dbReference>
<dbReference type="SUPFAM" id="SSF48452">
    <property type="entry name" value="TPR-like"/>
    <property type="match status" value="1"/>
</dbReference>
<dbReference type="PROSITE" id="PS51375">
    <property type="entry name" value="PPR"/>
    <property type="match status" value="10"/>
</dbReference>
<reference key="1">
    <citation type="journal article" date="1999" name="Nature">
        <title>Sequence and analysis of chromosome 2 of the plant Arabidopsis thaliana.</title>
        <authorList>
            <person name="Lin X."/>
            <person name="Kaul S."/>
            <person name="Rounsley S.D."/>
            <person name="Shea T.P."/>
            <person name="Benito M.-I."/>
            <person name="Town C.D."/>
            <person name="Fujii C.Y."/>
            <person name="Mason T.M."/>
            <person name="Bowman C.L."/>
            <person name="Barnstead M.E."/>
            <person name="Feldblyum T.V."/>
            <person name="Buell C.R."/>
            <person name="Ketchum K.A."/>
            <person name="Lee J.J."/>
            <person name="Ronning C.M."/>
            <person name="Koo H.L."/>
            <person name="Moffat K.S."/>
            <person name="Cronin L.A."/>
            <person name="Shen M."/>
            <person name="Pai G."/>
            <person name="Van Aken S."/>
            <person name="Umayam L."/>
            <person name="Tallon L.J."/>
            <person name="Gill J.E."/>
            <person name="Adams M.D."/>
            <person name="Carrera A.J."/>
            <person name="Creasy T.H."/>
            <person name="Goodman H.M."/>
            <person name="Somerville C.R."/>
            <person name="Copenhaver G.P."/>
            <person name="Preuss D."/>
            <person name="Nierman W.C."/>
            <person name="White O."/>
            <person name="Eisen J.A."/>
            <person name="Salzberg S.L."/>
            <person name="Fraser C.M."/>
            <person name="Venter J.C."/>
        </authorList>
    </citation>
    <scope>NUCLEOTIDE SEQUENCE [LARGE SCALE GENOMIC DNA]</scope>
    <source>
        <strain>cv. Columbia</strain>
    </source>
</reference>
<reference key="2">
    <citation type="journal article" date="2017" name="Plant J.">
        <title>Araport11: a complete reannotation of the Arabidopsis thaliana reference genome.</title>
        <authorList>
            <person name="Cheng C.Y."/>
            <person name="Krishnakumar V."/>
            <person name="Chan A.P."/>
            <person name="Thibaud-Nissen F."/>
            <person name="Schobel S."/>
            <person name="Town C.D."/>
        </authorList>
    </citation>
    <scope>GENOME REANNOTATION</scope>
    <source>
        <strain>cv. Columbia</strain>
    </source>
</reference>
<reference key="3">
    <citation type="journal article" date="2003" name="Science">
        <title>Empirical analysis of transcriptional activity in the Arabidopsis genome.</title>
        <authorList>
            <person name="Yamada K."/>
            <person name="Lim J."/>
            <person name="Dale J.M."/>
            <person name="Chen H."/>
            <person name="Shinn P."/>
            <person name="Palm C.J."/>
            <person name="Southwick A.M."/>
            <person name="Wu H.C."/>
            <person name="Kim C.J."/>
            <person name="Nguyen M."/>
            <person name="Pham P.K."/>
            <person name="Cheuk R.F."/>
            <person name="Karlin-Newmann G."/>
            <person name="Liu S.X."/>
            <person name="Lam B."/>
            <person name="Sakano H."/>
            <person name="Wu T."/>
            <person name="Yu G."/>
            <person name="Miranda M."/>
            <person name="Quach H.L."/>
            <person name="Tripp M."/>
            <person name="Chang C.H."/>
            <person name="Lee J.M."/>
            <person name="Toriumi M.J."/>
            <person name="Chan M.M."/>
            <person name="Tang C.C."/>
            <person name="Onodera C.S."/>
            <person name="Deng J.M."/>
            <person name="Akiyama K."/>
            <person name="Ansari Y."/>
            <person name="Arakawa T."/>
            <person name="Banh J."/>
            <person name="Banno F."/>
            <person name="Bowser L."/>
            <person name="Brooks S.Y."/>
            <person name="Carninci P."/>
            <person name="Chao Q."/>
            <person name="Choy N."/>
            <person name="Enju A."/>
            <person name="Goldsmith A.D."/>
            <person name="Gurjal M."/>
            <person name="Hansen N.F."/>
            <person name="Hayashizaki Y."/>
            <person name="Johnson-Hopson C."/>
            <person name="Hsuan V.W."/>
            <person name="Iida K."/>
            <person name="Karnes M."/>
            <person name="Khan S."/>
            <person name="Koesema E."/>
            <person name="Ishida J."/>
            <person name="Jiang P.X."/>
            <person name="Jones T."/>
            <person name="Kawai J."/>
            <person name="Kamiya A."/>
            <person name="Meyers C."/>
            <person name="Nakajima M."/>
            <person name="Narusaka M."/>
            <person name="Seki M."/>
            <person name="Sakurai T."/>
            <person name="Satou M."/>
            <person name="Tamse R."/>
            <person name="Vaysberg M."/>
            <person name="Wallender E.K."/>
            <person name="Wong C."/>
            <person name="Yamamura Y."/>
            <person name="Yuan S."/>
            <person name="Shinozaki K."/>
            <person name="Davis R.W."/>
            <person name="Theologis A."/>
            <person name="Ecker J.R."/>
        </authorList>
    </citation>
    <scope>NUCLEOTIDE SEQUENCE [LARGE SCALE MRNA]</scope>
    <source>
        <strain>cv. Columbia</strain>
    </source>
</reference>
<reference key="4">
    <citation type="journal article" date="2000" name="Plant Mol. Biol.">
        <title>In Arabidopsis thaliana, 1% of the genome codes for a novel protein family unique to plants.</title>
        <authorList>
            <person name="Aubourg S."/>
            <person name="Boudet N."/>
            <person name="Kreis M."/>
            <person name="Lecharny A."/>
        </authorList>
    </citation>
    <scope>GENE FAMILY</scope>
</reference>
<reference key="5">
    <citation type="journal article" date="2004" name="Plant Cell">
        <title>Genome-wide analysis of Arabidopsis pentatricopeptide repeat proteins reveals their essential role in organelle biogenesis.</title>
        <authorList>
            <person name="Lurin C."/>
            <person name="Andres C."/>
            <person name="Aubourg S."/>
            <person name="Bellaoui M."/>
            <person name="Bitton F."/>
            <person name="Bruyere C."/>
            <person name="Caboche M."/>
            <person name="Debast C."/>
            <person name="Gualberto J."/>
            <person name="Hoffmann B."/>
            <person name="Lecharny A."/>
            <person name="Le Ret M."/>
            <person name="Martin-Magniette M.-L."/>
            <person name="Mireau H."/>
            <person name="Peeters N."/>
            <person name="Renou J.-P."/>
            <person name="Szurek B."/>
            <person name="Taconnat L."/>
            <person name="Small I."/>
        </authorList>
    </citation>
    <scope>GENE FAMILY</scope>
</reference>
<keyword id="KW-0496">Mitochondrion</keyword>
<keyword id="KW-1185">Reference proteome</keyword>
<keyword id="KW-0677">Repeat</keyword>
<keyword id="KW-0809">Transit peptide</keyword>
<sequence length="630" mass="71699">MKSVMSKIKLFRPVVTLRCSYSSTDQTLLLSEFTRLCYQRDLPRAMKAMDSLQSHGLWADSATYSELIKCCISNRAVHEGNLICRHLYFNGHRPMMFLVNVLINMYVKFNLLNDAHQLFDQMPQRNVISWTTMISAYSKCKIHQKALELLVLMLRDNVRPNVYTYSSVLRSCNGMSDVRMLHCGIIKEGLESDVFVRSALIDVFAKLGEPEDALSVFDEMVTGDAIVWNSIIGGFAQNSRSDVALELFKRMKRAGFIAEQATLTSVLRACTGLALLELGMQAHVHIVKYDQDLILNNALVDMYCKCGSLEDALRVFNQMKERDVITWSTMISGLAQNGYSQEALKLFERMKSSGTKPNYITIVGVLFACSHAGLLEDGWYYFRSMKKLYGIDPVREHYGCMIDLLGKAGKLDDAVKLLNEMECEPDAVTWRTLLGACRVQRNMVLAEYAAKKVIALDPEDAGTYTLLSNIYANSQKWDSVEEIRTRMRDRGIKKEPGCSWIEVNKQIHAFIIGDNSHPQIVEVSKKLNQLIHRLTGIGYVPETNFVLQDLEGEQMEDSLRHHSEKLALAFGLMTLPIEKVIRIRKNLRICGDCHVFCKLASKLEIRSIVIRDPIRYHHFQDGKCSCGDYW</sequence>
<feature type="transit peptide" description="Mitochondrion" evidence="1">
    <location>
        <begin position="1"/>
        <end position="76"/>
    </location>
</feature>
<feature type="chain" id="PRO_0000356007" description="Pentatricopeptide repeat-containing protein At2g03880, mitochondrial">
    <location>
        <begin position="77"/>
        <end position="630"/>
    </location>
</feature>
<feature type="repeat" description="PPR 1">
    <location>
        <begin position="60"/>
        <end position="94"/>
    </location>
</feature>
<feature type="repeat" description="PPR 2">
    <location>
        <begin position="95"/>
        <end position="125"/>
    </location>
</feature>
<feature type="repeat" description="PPR 3">
    <location>
        <begin position="126"/>
        <end position="160"/>
    </location>
</feature>
<feature type="repeat" description="PPR 4">
    <location>
        <begin position="161"/>
        <end position="192"/>
    </location>
</feature>
<feature type="repeat" description="PPR 5">
    <location>
        <begin position="193"/>
        <end position="223"/>
    </location>
</feature>
<feature type="repeat" description="PPR 6">
    <location>
        <begin position="224"/>
        <end position="258"/>
    </location>
</feature>
<feature type="repeat" description="PPR 7">
    <location>
        <begin position="259"/>
        <end position="289"/>
    </location>
</feature>
<feature type="repeat" description="PPR 8">
    <location>
        <begin position="292"/>
        <end position="322"/>
    </location>
</feature>
<feature type="repeat" description="PPR 9">
    <location>
        <begin position="323"/>
        <end position="357"/>
    </location>
</feature>
<feature type="repeat" description="PPR 10">
    <location>
        <begin position="358"/>
        <end position="388"/>
    </location>
</feature>
<feature type="repeat" description="PPR 11">
    <location>
        <begin position="394"/>
        <end position="424"/>
    </location>
</feature>
<feature type="region of interest" description="Type E motif">
    <location>
        <begin position="429"/>
        <end position="504"/>
    </location>
</feature>
<feature type="region of interest" description="Type E(+) motif">
    <location>
        <begin position="505"/>
        <end position="535"/>
    </location>
</feature>
<feature type="region of interest" description="Type DYW motif">
    <location>
        <begin position="536"/>
        <end position="630"/>
    </location>
</feature>
<feature type="sequence conflict" description="In Ref. 3; AAO41891." evidence="2" ref="3">
    <original>D</original>
    <variation>G</variation>
    <location>
        <position position="612"/>
    </location>
</feature>
<comment type="subcellular location">
    <subcellularLocation>
        <location evidence="2">Mitochondrion</location>
    </subcellularLocation>
</comment>
<comment type="similarity">
    <text evidence="2">Belongs to the PPR family. PCMP-H subfamily.</text>
</comment>
<comment type="online information" name="Pentatricopeptide repeat proteins">
    <link uri="https://ppr.plantenergy.uwa.edu.au"/>
</comment>
<evidence type="ECO:0000255" key="1"/>
<evidence type="ECO:0000305" key="2"/>
<gene>
    <name type="primary">PCMP-H44</name>
    <name type="ordered locus">At2g03880</name>
    <name type="ORF">T18C20.8</name>
</gene>
<protein>
    <recommendedName>
        <fullName>Pentatricopeptide repeat-containing protein At2g03880, mitochondrial</fullName>
    </recommendedName>
</protein>
<proteinExistence type="evidence at transcript level"/>
<accession>Q9SI53</accession>
<accession>Q84WG8</accession>
<organism>
    <name type="scientific">Arabidopsis thaliana</name>
    <name type="common">Mouse-ear cress</name>
    <dbReference type="NCBI Taxonomy" id="3702"/>
    <lineage>
        <taxon>Eukaryota</taxon>
        <taxon>Viridiplantae</taxon>
        <taxon>Streptophyta</taxon>
        <taxon>Embryophyta</taxon>
        <taxon>Tracheophyta</taxon>
        <taxon>Spermatophyta</taxon>
        <taxon>Magnoliopsida</taxon>
        <taxon>eudicotyledons</taxon>
        <taxon>Gunneridae</taxon>
        <taxon>Pentapetalae</taxon>
        <taxon>rosids</taxon>
        <taxon>malvids</taxon>
        <taxon>Brassicales</taxon>
        <taxon>Brassicaceae</taxon>
        <taxon>Camelineae</taxon>
        <taxon>Arabidopsis</taxon>
    </lineage>
</organism>
<name>PP147_ARATH</name>